<name>UL34_HCMVT</name>
<protein>
    <recommendedName>
        <fullName>Transcriptional regulator UL34</fullName>
    </recommendedName>
</protein>
<comment type="function">
    <text evidence="2">Acts as a transcriptional repressor of the US3 gene expression through a specific DNA sequence named the transcriptional repressive element (tre).</text>
</comment>
<comment type="subcellular location">
    <subcellularLocation>
        <location evidence="2">Host nucleus</location>
    </subcellularLocation>
</comment>
<comment type="similarity">
    <text evidence="3">Belongs to the HHV-5 UL34 protein family.</text>
</comment>
<dbReference type="EMBL" id="FJ616285">
    <property type="protein sequence ID" value="ACM48024.1"/>
    <property type="molecule type" value="Genomic_DNA"/>
</dbReference>
<dbReference type="SMR" id="B9VXK4"/>
<dbReference type="Proteomes" id="UP000006907">
    <property type="component" value="Segment"/>
</dbReference>
<dbReference type="GO" id="GO:0042025">
    <property type="term" value="C:host cell nucleus"/>
    <property type="evidence" value="ECO:0007669"/>
    <property type="project" value="UniProtKB-SubCell"/>
</dbReference>
<keyword id="KW-1048">Host nucleus</keyword>
<keyword id="KW-0804">Transcription</keyword>
<keyword id="KW-0805">Transcription regulation</keyword>
<gene>
    <name type="primary">UL34</name>
</gene>
<feature type="chain" id="PRO_0000416716" description="Transcriptional regulator UL34">
    <location>
        <begin position="1"/>
        <end position="407"/>
    </location>
</feature>
<feature type="region of interest" description="Disordered" evidence="1">
    <location>
        <begin position="268"/>
        <end position="330"/>
    </location>
</feature>
<feature type="region of interest" description="Disordered" evidence="1">
    <location>
        <begin position="388"/>
        <end position="407"/>
    </location>
</feature>
<feature type="compositionally biased region" description="Acidic residues" evidence="1">
    <location>
        <begin position="273"/>
        <end position="286"/>
    </location>
</feature>
<feature type="compositionally biased region" description="Basic and acidic residues" evidence="1">
    <location>
        <begin position="287"/>
        <end position="301"/>
    </location>
</feature>
<feature type="compositionally biased region" description="Basic residues" evidence="1">
    <location>
        <begin position="302"/>
        <end position="312"/>
    </location>
</feature>
<reference key="1">
    <citation type="journal article" date="2009" name="J. Gen. Virol.">
        <title>High-throughput sequence analysis of variants of human cytomegalovirus strains Towne and AD169.</title>
        <authorList>
            <person name="Bradley A.J."/>
            <person name="Lurain N.S."/>
            <person name="Ghazal P."/>
            <person name="Trivedi U."/>
            <person name="Cunningham C."/>
            <person name="Baluchova K."/>
            <person name="Gatherer D."/>
            <person name="Wilkinson G.W."/>
            <person name="Dargan D.J."/>
            <person name="Davison A.J."/>
        </authorList>
    </citation>
    <scope>NUCLEOTIDE SEQUENCE [LARGE SCALE GENOMIC DNA]</scope>
</reference>
<reference key="2">
    <citation type="journal article" date="2004" name="J. Gen. Virol.">
        <title>Genetic content of wild-type human cytomegalovirus.</title>
        <authorList>
            <person name="Dolan A."/>
            <person name="Cunningham C."/>
            <person name="Hector R.D."/>
            <person name="Hassan-Walker A.F."/>
            <person name="Lee L."/>
            <person name="Addison C."/>
            <person name="Dargan D.J."/>
            <person name="McGeoch D.J."/>
            <person name="Gatherer D."/>
            <person name="Emery V.C."/>
            <person name="Griffiths P.D."/>
            <person name="Sinzger C."/>
            <person name="McSharry B.P."/>
            <person name="Wilkinson G.W.G."/>
            <person name="Davison A.J."/>
        </authorList>
    </citation>
    <scope>NUCLEOTIDE SEQUENCE [LARGE SCALE GENOMIC DNA]</scope>
</reference>
<reference key="3">
    <citation type="journal article" date="2001" name="J. Virol.">
        <title>Identification of a novel transcriptional repressor encoded by human cytomegalovirus.</title>
        <authorList>
            <person name="LaPierre L.A."/>
            <person name="Biegalke B.J."/>
        </authorList>
    </citation>
    <scope>FUNCTION</scope>
    <scope>SUBCELLULAR LOCATION</scope>
</reference>
<organism>
    <name type="scientific">Human cytomegalovirus (strain Towne)</name>
    <name type="common">HHV-5</name>
    <name type="synonym">Human herpesvirus 5</name>
    <dbReference type="NCBI Taxonomy" id="10363"/>
    <lineage>
        <taxon>Viruses</taxon>
        <taxon>Duplodnaviria</taxon>
        <taxon>Heunggongvirae</taxon>
        <taxon>Peploviricota</taxon>
        <taxon>Herviviricetes</taxon>
        <taxon>Herpesvirales</taxon>
        <taxon>Orthoherpesviridae</taxon>
        <taxon>Betaherpesvirinae</taxon>
        <taxon>Cytomegalovirus</taxon>
        <taxon>Cytomegalovirus humanbeta5</taxon>
        <taxon>Human cytomegalovirus</taxon>
    </lineage>
</organism>
<organismHost>
    <name type="scientific">Homo sapiens</name>
    <name type="common">Human</name>
    <dbReference type="NCBI Taxonomy" id="9606"/>
</organismHost>
<proteinExistence type="inferred from homology"/>
<sequence length="407" mass="45358">MNFIITTRDFSNDDSVLRAAEMRDNVAGSISKAYKGTVRAEGKKKLLLKHLPVPPGGCSRRNSNLFVFCTERDYRKFHQGIAQLKRAPAELDPHEIQQVTASIRCRLQPSLREPPTPADELQTAVSRVCALFNQLVFTAQLRHYCEHQDKVVSYARDELTKRCGEKSALGVEVHQLVALLPHERHRELCHVLIGLLHQTPHMWARSIRLIGHLRHYLQNSFLHLLMNSGLDIAQVFDGCYHSEAYRMLFQIGHTDSVSAALELSHSAAAGPPEADENNDEGEEDDDELRHSDPAPLHESKKPRNARRPRTRVPPHEQKPEENEEEEEELFPSCKATAAFLRAEPSVSNDDGNGGERCDTLATALRHCADEEDGPLASQTAVRVAATPSPSVTPALTPVTSPITPLCI</sequence>
<evidence type="ECO:0000256" key="1">
    <source>
        <dbReference type="SAM" id="MobiDB-lite"/>
    </source>
</evidence>
<evidence type="ECO:0000269" key="2">
    <source>
    </source>
</evidence>
<evidence type="ECO:0000305" key="3"/>
<accession>B9VXK4</accession>